<keyword id="KW-1185">Reference proteome</keyword>
<keyword id="KW-0687">Ribonucleoprotein</keyword>
<keyword id="KW-0689">Ribosomal protein</keyword>
<organism>
    <name type="scientific">Photorhabdus laumondii subsp. laumondii (strain DSM 15139 / CIP 105565 / TT01)</name>
    <name type="common">Photorhabdus luminescens subsp. laumondii</name>
    <dbReference type="NCBI Taxonomy" id="243265"/>
    <lineage>
        <taxon>Bacteria</taxon>
        <taxon>Pseudomonadati</taxon>
        <taxon>Pseudomonadota</taxon>
        <taxon>Gammaproteobacteria</taxon>
        <taxon>Enterobacterales</taxon>
        <taxon>Morganellaceae</taxon>
        <taxon>Photorhabdus</taxon>
    </lineage>
</organism>
<protein>
    <recommendedName>
        <fullName evidence="1">Large ribosomal subunit protein bL27</fullName>
    </recommendedName>
    <alternativeName>
        <fullName evidence="3">50S ribosomal protein L27</fullName>
    </alternativeName>
</protein>
<gene>
    <name evidence="1" type="primary">rpmA</name>
    <name type="ordered locus">plu4541</name>
</gene>
<proteinExistence type="inferred from homology"/>
<evidence type="ECO:0000255" key="1">
    <source>
        <dbReference type="HAMAP-Rule" id="MF_00539"/>
    </source>
</evidence>
<evidence type="ECO:0000256" key="2">
    <source>
        <dbReference type="SAM" id="MobiDB-lite"/>
    </source>
</evidence>
<evidence type="ECO:0000305" key="3"/>
<name>RL27_PHOLL</name>
<accession>Q7MYX5</accession>
<reference key="1">
    <citation type="journal article" date="2003" name="Nat. Biotechnol.">
        <title>The genome sequence of the entomopathogenic bacterium Photorhabdus luminescens.</title>
        <authorList>
            <person name="Duchaud E."/>
            <person name="Rusniok C."/>
            <person name="Frangeul L."/>
            <person name="Buchrieser C."/>
            <person name="Givaudan A."/>
            <person name="Taourit S."/>
            <person name="Bocs S."/>
            <person name="Boursaux-Eude C."/>
            <person name="Chandler M."/>
            <person name="Charles J.-F."/>
            <person name="Dassa E."/>
            <person name="Derose R."/>
            <person name="Derzelle S."/>
            <person name="Freyssinet G."/>
            <person name="Gaudriault S."/>
            <person name="Medigue C."/>
            <person name="Lanois A."/>
            <person name="Powell K."/>
            <person name="Siguier P."/>
            <person name="Vincent R."/>
            <person name="Wingate V."/>
            <person name="Zouine M."/>
            <person name="Glaser P."/>
            <person name="Boemare N."/>
            <person name="Danchin A."/>
            <person name="Kunst F."/>
        </authorList>
    </citation>
    <scope>NUCLEOTIDE SEQUENCE [LARGE SCALE GENOMIC DNA]</scope>
    <source>
        <strain>DSM 15139 / CIP 105565 / TT01</strain>
    </source>
</reference>
<dbReference type="EMBL" id="BX571874">
    <property type="protein sequence ID" value="CAE16913.1"/>
    <property type="molecule type" value="Genomic_DNA"/>
</dbReference>
<dbReference type="RefSeq" id="WP_011148617.1">
    <property type="nucleotide sequence ID" value="NC_005126.1"/>
</dbReference>
<dbReference type="SMR" id="Q7MYX5"/>
<dbReference type="STRING" id="243265.plu4541"/>
<dbReference type="GeneID" id="88857729"/>
<dbReference type="KEGG" id="plu:plu4541"/>
<dbReference type="eggNOG" id="COG0211">
    <property type="taxonomic scope" value="Bacteria"/>
</dbReference>
<dbReference type="HOGENOM" id="CLU_095424_4_1_6"/>
<dbReference type="OrthoDB" id="9803474at2"/>
<dbReference type="Proteomes" id="UP000002514">
    <property type="component" value="Chromosome"/>
</dbReference>
<dbReference type="GO" id="GO:0022625">
    <property type="term" value="C:cytosolic large ribosomal subunit"/>
    <property type="evidence" value="ECO:0007669"/>
    <property type="project" value="TreeGrafter"/>
</dbReference>
<dbReference type="GO" id="GO:0003735">
    <property type="term" value="F:structural constituent of ribosome"/>
    <property type="evidence" value="ECO:0007669"/>
    <property type="project" value="InterPro"/>
</dbReference>
<dbReference type="GO" id="GO:0006412">
    <property type="term" value="P:translation"/>
    <property type="evidence" value="ECO:0007669"/>
    <property type="project" value="UniProtKB-UniRule"/>
</dbReference>
<dbReference type="FunFam" id="2.40.50.100:FF:000001">
    <property type="entry name" value="50S ribosomal protein L27"/>
    <property type="match status" value="1"/>
</dbReference>
<dbReference type="Gene3D" id="2.40.50.100">
    <property type="match status" value="1"/>
</dbReference>
<dbReference type="HAMAP" id="MF_00539">
    <property type="entry name" value="Ribosomal_bL27"/>
    <property type="match status" value="1"/>
</dbReference>
<dbReference type="InterPro" id="IPR001684">
    <property type="entry name" value="Ribosomal_bL27"/>
</dbReference>
<dbReference type="InterPro" id="IPR018261">
    <property type="entry name" value="Ribosomal_bL27_CS"/>
</dbReference>
<dbReference type="NCBIfam" id="TIGR00062">
    <property type="entry name" value="L27"/>
    <property type="match status" value="1"/>
</dbReference>
<dbReference type="PANTHER" id="PTHR15893:SF0">
    <property type="entry name" value="LARGE RIBOSOMAL SUBUNIT PROTEIN BL27M"/>
    <property type="match status" value="1"/>
</dbReference>
<dbReference type="PANTHER" id="PTHR15893">
    <property type="entry name" value="RIBOSOMAL PROTEIN L27"/>
    <property type="match status" value="1"/>
</dbReference>
<dbReference type="Pfam" id="PF01016">
    <property type="entry name" value="Ribosomal_L27"/>
    <property type="match status" value="1"/>
</dbReference>
<dbReference type="PRINTS" id="PR00063">
    <property type="entry name" value="RIBOSOMALL27"/>
</dbReference>
<dbReference type="SUPFAM" id="SSF110324">
    <property type="entry name" value="Ribosomal L27 protein-like"/>
    <property type="match status" value="1"/>
</dbReference>
<dbReference type="PROSITE" id="PS00831">
    <property type="entry name" value="RIBOSOMAL_L27"/>
    <property type="match status" value="1"/>
</dbReference>
<feature type="chain" id="PRO_0000181140" description="Large ribosomal subunit protein bL27">
    <location>
        <begin position="1"/>
        <end position="85"/>
    </location>
</feature>
<feature type="region of interest" description="Disordered" evidence="2">
    <location>
        <begin position="1"/>
        <end position="21"/>
    </location>
</feature>
<sequence>MAHKKAGGSTRNGRDSESKRLGVKRFGGESVLAGSIIVRQRGTKFHAGNNVGCGRDHTLFALADGKVKFEVKGPKNRKFISIEAE</sequence>
<comment type="similarity">
    <text evidence="1">Belongs to the bacterial ribosomal protein bL27 family.</text>
</comment>